<proteinExistence type="inferred from homology"/>
<evidence type="ECO:0000255" key="1">
    <source>
        <dbReference type="HAMAP-Rule" id="MF_00627"/>
    </source>
</evidence>
<sequence>MKALSKLKAEEGIWMTDVPVPELGHNDLLIKIRKTAICGTDVHIYNWDEWSQKTIPVPMVVGHEYVGEVVGIGQEVKGFKIGDRVSGEGHITCGHCRNCRGGRTHLCRNTIGVGVNRPGCFAEYLVIPAFNAFKIPDNISDDLASIFDPFGNAVHTALSFDLVGEDVLVSGAGPIGIMAAAVAKHVGARNVVITDVNEYRLELARKMGITRAVNVAKENLNDVMTELGMTEGFDVGLEMSGAPPAFRTMLDTMNHGGRIAMLGIPPSDMSIDWTKVIFKGLFIKGIYGREMFETWYKMAALIQSGLDLSPIITHRFSIDDFQKGFDAMRSGQSGKVILSWD</sequence>
<reference key="1">
    <citation type="journal article" date="2006" name="Proc. Natl. Acad. Sci. U.S.A.">
        <title>Identification of genes subject to positive selection in uropathogenic strains of Escherichia coli: a comparative genomics approach.</title>
        <authorList>
            <person name="Chen S.L."/>
            <person name="Hung C.-S."/>
            <person name="Xu J."/>
            <person name="Reigstad C.S."/>
            <person name="Magrini V."/>
            <person name="Sabo A."/>
            <person name="Blasiar D."/>
            <person name="Bieri T."/>
            <person name="Meyer R.R."/>
            <person name="Ozersky P."/>
            <person name="Armstrong J.R."/>
            <person name="Fulton R.S."/>
            <person name="Latreille J.P."/>
            <person name="Spieth J."/>
            <person name="Hooton T.M."/>
            <person name="Mardis E.R."/>
            <person name="Hultgren S.J."/>
            <person name="Gordon J.I."/>
        </authorList>
    </citation>
    <scope>NUCLEOTIDE SEQUENCE [LARGE SCALE GENOMIC DNA]</scope>
    <source>
        <strain>UTI89 / UPEC</strain>
    </source>
</reference>
<feature type="chain" id="PRO_1000051634" description="L-threonine 3-dehydrogenase">
    <location>
        <begin position="1"/>
        <end position="341"/>
    </location>
</feature>
<feature type="active site" description="Charge relay system" evidence="1">
    <location>
        <position position="40"/>
    </location>
</feature>
<feature type="active site" description="Charge relay system" evidence="1">
    <location>
        <position position="43"/>
    </location>
</feature>
<feature type="binding site" evidence="1">
    <location>
        <position position="38"/>
    </location>
    <ligand>
        <name>Zn(2+)</name>
        <dbReference type="ChEBI" id="CHEBI:29105"/>
        <label>1</label>
        <note>catalytic</note>
    </ligand>
</feature>
<feature type="binding site" evidence="1">
    <location>
        <position position="63"/>
    </location>
    <ligand>
        <name>Zn(2+)</name>
        <dbReference type="ChEBI" id="CHEBI:29105"/>
        <label>1</label>
        <note>catalytic</note>
    </ligand>
</feature>
<feature type="binding site" evidence="1">
    <location>
        <position position="64"/>
    </location>
    <ligand>
        <name>Zn(2+)</name>
        <dbReference type="ChEBI" id="CHEBI:29105"/>
        <label>1</label>
        <note>catalytic</note>
    </ligand>
</feature>
<feature type="binding site" evidence="1">
    <location>
        <position position="93"/>
    </location>
    <ligand>
        <name>Zn(2+)</name>
        <dbReference type="ChEBI" id="CHEBI:29105"/>
        <label>2</label>
    </ligand>
</feature>
<feature type="binding site" evidence="1">
    <location>
        <position position="96"/>
    </location>
    <ligand>
        <name>Zn(2+)</name>
        <dbReference type="ChEBI" id="CHEBI:29105"/>
        <label>2</label>
    </ligand>
</feature>
<feature type="binding site" evidence="1">
    <location>
        <position position="99"/>
    </location>
    <ligand>
        <name>Zn(2+)</name>
        <dbReference type="ChEBI" id="CHEBI:29105"/>
        <label>2</label>
    </ligand>
</feature>
<feature type="binding site" evidence="1">
    <location>
        <position position="107"/>
    </location>
    <ligand>
        <name>Zn(2+)</name>
        <dbReference type="ChEBI" id="CHEBI:29105"/>
        <label>2</label>
    </ligand>
</feature>
<feature type="binding site" evidence="1">
    <location>
        <position position="175"/>
    </location>
    <ligand>
        <name>NAD(+)</name>
        <dbReference type="ChEBI" id="CHEBI:57540"/>
    </ligand>
</feature>
<feature type="binding site" evidence="1">
    <location>
        <position position="195"/>
    </location>
    <ligand>
        <name>NAD(+)</name>
        <dbReference type="ChEBI" id="CHEBI:57540"/>
    </ligand>
</feature>
<feature type="binding site" evidence="1">
    <location>
        <position position="200"/>
    </location>
    <ligand>
        <name>NAD(+)</name>
        <dbReference type="ChEBI" id="CHEBI:57540"/>
    </ligand>
</feature>
<feature type="binding site" evidence="1">
    <location>
        <begin position="262"/>
        <end position="264"/>
    </location>
    <ligand>
        <name>NAD(+)</name>
        <dbReference type="ChEBI" id="CHEBI:57540"/>
    </ligand>
</feature>
<feature type="binding site" evidence="1">
    <location>
        <begin position="286"/>
        <end position="287"/>
    </location>
    <ligand>
        <name>NAD(+)</name>
        <dbReference type="ChEBI" id="CHEBI:57540"/>
    </ligand>
</feature>
<feature type="site" description="Important for catalytic activity for the proton relay mechanism but does not participate directly in the coordination of zinc atom" evidence="1">
    <location>
        <position position="148"/>
    </location>
</feature>
<protein>
    <recommendedName>
        <fullName evidence="1">L-threonine 3-dehydrogenase</fullName>
        <shortName evidence="1">TDH</shortName>
        <ecNumber evidence="1">1.1.1.103</ecNumber>
    </recommendedName>
</protein>
<name>TDH_ECOUT</name>
<gene>
    <name evidence="1" type="primary">tdh</name>
    <name type="ordered locus">UTI89_C4162</name>
</gene>
<comment type="function">
    <text evidence="1">Catalyzes the NAD(+)-dependent oxidation of L-threonine to 2-amino-3-ketobutyrate.</text>
</comment>
<comment type="catalytic activity">
    <reaction evidence="1">
        <text>L-threonine + NAD(+) = (2S)-2-amino-3-oxobutanoate + NADH + H(+)</text>
        <dbReference type="Rhea" id="RHEA:13161"/>
        <dbReference type="ChEBI" id="CHEBI:15378"/>
        <dbReference type="ChEBI" id="CHEBI:57540"/>
        <dbReference type="ChEBI" id="CHEBI:57926"/>
        <dbReference type="ChEBI" id="CHEBI:57945"/>
        <dbReference type="ChEBI" id="CHEBI:78948"/>
        <dbReference type="EC" id="1.1.1.103"/>
    </reaction>
</comment>
<comment type="cofactor">
    <cofactor evidence="1">
        <name>Zn(2+)</name>
        <dbReference type="ChEBI" id="CHEBI:29105"/>
    </cofactor>
    <text evidence="1">Binds 2 Zn(2+) ions per subunit.</text>
</comment>
<comment type="pathway">
    <text evidence="1">Amino-acid degradation; L-threonine degradation via oxydo-reductase pathway; glycine from L-threonine: step 1/2.</text>
</comment>
<comment type="subunit">
    <text evidence="1">Homotetramer.</text>
</comment>
<comment type="subcellular location">
    <subcellularLocation>
        <location evidence="1">Cytoplasm</location>
    </subcellularLocation>
</comment>
<comment type="similarity">
    <text evidence="1">Belongs to the zinc-containing alcohol dehydrogenase family.</text>
</comment>
<keyword id="KW-0963">Cytoplasm</keyword>
<keyword id="KW-0479">Metal-binding</keyword>
<keyword id="KW-0520">NAD</keyword>
<keyword id="KW-0560">Oxidoreductase</keyword>
<keyword id="KW-0862">Zinc</keyword>
<accession>Q1R4X4</accession>
<organism>
    <name type="scientific">Escherichia coli (strain UTI89 / UPEC)</name>
    <dbReference type="NCBI Taxonomy" id="364106"/>
    <lineage>
        <taxon>Bacteria</taxon>
        <taxon>Pseudomonadati</taxon>
        <taxon>Pseudomonadota</taxon>
        <taxon>Gammaproteobacteria</taxon>
        <taxon>Enterobacterales</taxon>
        <taxon>Enterobacteriaceae</taxon>
        <taxon>Escherichia</taxon>
    </lineage>
</organism>
<dbReference type="EC" id="1.1.1.103" evidence="1"/>
<dbReference type="EMBL" id="CP000243">
    <property type="protein sequence ID" value="ABE09590.1"/>
    <property type="molecule type" value="Genomic_DNA"/>
</dbReference>
<dbReference type="RefSeq" id="WP_000646018.1">
    <property type="nucleotide sequence ID" value="NZ_CP064825.1"/>
</dbReference>
<dbReference type="SMR" id="Q1R4X4"/>
<dbReference type="KEGG" id="eci:UTI89_C4162"/>
<dbReference type="HOGENOM" id="CLU_026673_11_0_6"/>
<dbReference type="UniPathway" id="UPA00046">
    <property type="reaction ID" value="UER00505"/>
</dbReference>
<dbReference type="Proteomes" id="UP000001952">
    <property type="component" value="Chromosome"/>
</dbReference>
<dbReference type="GO" id="GO:0005737">
    <property type="term" value="C:cytoplasm"/>
    <property type="evidence" value="ECO:0007669"/>
    <property type="project" value="UniProtKB-SubCell"/>
</dbReference>
<dbReference type="GO" id="GO:0008743">
    <property type="term" value="F:L-threonine 3-dehydrogenase activity"/>
    <property type="evidence" value="ECO:0007669"/>
    <property type="project" value="UniProtKB-UniRule"/>
</dbReference>
<dbReference type="GO" id="GO:0008270">
    <property type="term" value="F:zinc ion binding"/>
    <property type="evidence" value="ECO:0007669"/>
    <property type="project" value="UniProtKB-UniRule"/>
</dbReference>
<dbReference type="GO" id="GO:0019518">
    <property type="term" value="P:L-threonine catabolic process to glycine"/>
    <property type="evidence" value="ECO:0007669"/>
    <property type="project" value="UniProtKB-UniPathway"/>
</dbReference>
<dbReference type="FunFam" id="3.40.50.720:FF:000059">
    <property type="entry name" value="L-threonine 3-dehydrogenase"/>
    <property type="match status" value="1"/>
</dbReference>
<dbReference type="Gene3D" id="3.90.180.10">
    <property type="entry name" value="Medium-chain alcohol dehydrogenases, catalytic domain"/>
    <property type="match status" value="1"/>
</dbReference>
<dbReference type="Gene3D" id="3.40.50.720">
    <property type="entry name" value="NAD(P)-binding Rossmann-like Domain"/>
    <property type="match status" value="1"/>
</dbReference>
<dbReference type="HAMAP" id="MF_00627">
    <property type="entry name" value="Thr_dehydrog"/>
    <property type="match status" value="1"/>
</dbReference>
<dbReference type="InterPro" id="IPR013149">
    <property type="entry name" value="ADH-like_C"/>
</dbReference>
<dbReference type="InterPro" id="IPR013154">
    <property type="entry name" value="ADH-like_N"/>
</dbReference>
<dbReference type="InterPro" id="IPR002328">
    <property type="entry name" value="ADH_Zn_CS"/>
</dbReference>
<dbReference type="InterPro" id="IPR011032">
    <property type="entry name" value="GroES-like_sf"/>
</dbReference>
<dbReference type="InterPro" id="IPR004627">
    <property type="entry name" value="L-Threonine_3-DHase"/>
</dbReference>
<dbReference type="InterPro" id="IPR036291">
    <property type="entry name" value="NAD(P)-bd_dom_sf"/>
</dbReference>
<dbReference type="InterPro" id="IPR020843">
    <property type="entry name" value="PKS_ER"/>
</dbReference>
<dbReference type="InterPro" id="IPR050129">
    <property type="entry name" value="Zn_alcohol_dh"/>
</dbReference>
<dbReference type="NCBIfam" id="NF003808">
    <property type="entry name" value="PRK05396.1"/>
    <property type="match status" value="1"/>
</dbReference>
<dbReference type="NCBIfam" id="TIGR00692">
    <property type="entry name" value="tdh"/>
    <property type="match status" value="1"/>
</dbReference>
<dbReference type="PANTHER" id="PTHR43401">
    <property type="entry name" value="L-THREONINE 3-DEHYDROGENASE"/>
    <property type="match status" value="1"/>
</dbReference>
<dbReference type="PANTHER" id="PTHR43401:SF2">
    <property type="entry name" value="L-THREONINE 3-DEHYDROGENASE"/>
    <property type="match status" value="1"/>
</dbReference>
<dbReference type="Pfam" id="PF08240">
    <property type="entry name" value="ADH_N"/>
    <property type="match status" value="1"/>
</dbReference>
<dbReference type="Pfam" id="PF00107">
    <property type="entry name" value="ADH_zinc_N"/>
    <property type="match status" value="1"/>
</dbReference>
<dbReference type="SMART" id="SM00829">
    <property type="entry name" value="PKS_ER"/>
    <property type="match status" value="1"/>
</dbReference>
<dbReference type="SUPFAM" id="SSF50129">
    <property type="entry name" value="GroES-like"/>
    <property type="match status" value="1"/>
</dbReference>
<dbReference type="SUPFAM" id="SSF51735">
    <property type="entry name" value="NAD(P)-binding Rossmann-fold domains"/>
    <property type="match status" value="1"/>
</dbReference>
<dbReference type="PROSITE" id="PS00059">
    <property type="entry name" value="ADH_ZINC"/>
    <property type="match status" value="1"/>
</dbReference>